<dbReference type="EMBL" id="AABR03056237">
    <property type="status" value="NOT_ANNOTATED_CDS"/>
    <property type="molecule type" value="Genomic_DNA"/>
</dbReference>
<dbReference type="EMBL" id="BK003980">
    <property type="protein sequence ID" value="DAA02225.1"/>
    <property type="molecule type" value="mRNA"/>
</dbReference>
<dbReference type="RefSeq" id="NP_001008828.1">
    <property type="nucleotide sequence ID" value="NM_001008828.1"/>
</dbReference>
<dbReference type="RefSeq" id="NP_001376191.1">
    <property type="nucleotide sequence ID" value="NM_001389262.1"/>
</dbReference>
<dbReference type="RefSeq" id="XP_006242387.1">
    <property type="nucleotide sequence ID" value="XM_006242325.3"/>
</dbReference>
<dbReference type="SMR" id="Q6IG05"/>
<dbReference type="BioGRID" id="256508">
    <property type="interactions" value="1"/>
</dbReference>
<dbReference type="FunCoup" id="Q6IG05">
    <property type="interactions" value="5"/>
</dbReference>
<dbReference type="STRING" id="10116.ENSRNOP00000070762"/>
<dbReference type="GlyGen" id="Q6IG05">
    <property type="glycosylation" value="1 site, 1 O-linked glycan (1 site)"/>
</dbReference>
<dbReference type="iPTMnet" id="Q6IG05"/>
<dbReference type="PhosphoSitePlus" id="Q6IG05"/>
<dbReference type="jPOST" id="Q6IG05"/>
<dbReference type="PaxDb" id="10116-ENSRNOP00000012640"/>
<dbReference type="Ensembl" id="ENSRNOT00000088923.2">
    <property type="protein sequence ID" value="ENSRNOP00000070762.1"/>
    <property type="gene ID" value="ENSRNOG00000043203.3"/>
</dbReference>
<dbReference type="GeneID" id="300247"/>
<dbReference type="KEGG" id="rno:300247"/>
<dbReference type="UCSC" id="RGD:1359576">
    <property type="organism name" value="rat"/>
</dbReference>
<dbReference type="AGR" id="RGD:1359576"/>
<dbReference type="CTD" id="9119"/>
<dbReference type="RGD" id="1359576">
    <property type="gene designation" value="Krt75"/>
</dbReference>
<dbReference type="eggNOG" id="ENOG502RTYA">
    <property type="taxonomic scope" value="Eukaryota"/>
</dbReference>
<dbReference type="GeneTree" id="ENSGT00940000155862"/>
<dbReference type="InParanoid" id="Q6IG05"/>
<dbReference type="OMA" id="SIKKQCS"/>
<dbReference type="PhylomeDB" id="Q6IG05"/>
<dbReference type="TreeFam" id="TF317854"/>
<dbReference type="Reactome" id="R-RNO-6805567">
    <property type="pathway name" value="Keratinization"/>
</dbReference>
<dbReference type="Reactome" id="R-RNO-6809371">
    <property type="pathway name" value="Formation of the cornified envelope"/>
</dbReference>
<dbReference type="PRO" id="PR:Q6IG05"/>
<dbReference type="Proteomes" id="UP000002494">
    <property type="component" value="Chromosome 7"/>
</dbReference>
<dbReference type="Bgee" id="ENSRNOG00000043203">
    <property type="expression patterns" value="Expressed in thymus and 5 other cell types or tissues"/>
</dbReference>
<dbReference type="ExpressionAtlas" id="Q6IG05">
    <property type="expression patterns" value="baseline and differential"/>
</dbReference>
<dbReference type="GO" id="GO:0001533">
    <property type="term" value="C:cornified envelope"/>
    <property type="evidence" value="ECO:0000266"/>
    <property type="project" value="RGD"/>
</dbReference>
<dbReference type="GO" id="GO:0005882">
    <property type="term" value="C:intermediate filament"/>
    <property type="evidence" value="ECO:0000266"/>
    <property type="project" value="RGD"/>
</dbReference>
<dbReference type="GO" id="GO:0045095">
    <property type="term" value="C:keratin filament"/>
    <property type="evidence" value="ECO:0000318"/>
    <property type="project" value="GO_Central"/>
</dbReference>
<dbReference type="GO" id="GO:0030280">
    <property type="term" value="F:structural constituent of skin epidermis"/>
    <property type="evidence" value="ECO:0000318"/>
    <property type="project" value="GO_Central"/>
</dbReference>
<dbReference type="GO" id="GO:0002244">
    <property type="term" value="P:hematopoietic progenitor cell differentiation"/>
    <property type="evidence" value="ECO:0000266"/>
    <property type="project" value="RGD"/>
</dbReference>
<dbReference type="GO" id="GO:0045109">
    <property type="term" value="P:intermediate filament organization"/>
    <property type="evidence" value="ECO:0000318"/>
    <property type="project" value="GO_Central"/>
</dbReference>
<dbReference type="GO" id="GO:0031424">
    <property type="term" value="P:keratinization"/>
    <property type="evidence" value="ECO:0000318"/>
    <property type="project" value="GO_Central"/>
</dbReference>
<dbReference type="FunFam" id="1.20.5.1160:FF:000001">
    <property type="entry name" value="Keratin type II"/>
    <property type="match status" value="1"/>
</dbReference>
<dbReference type="FunFam" id="1.20.5.170:FF:000004">
    <property type="entry name" value="Keratin, type II cytoskeletal 5"/>
    <property type="match status" value="1"/>
</dbReference>
<dbReference type="FunFam" id="1.20.5.500:FF:000001">
    <property type="entry name" value="Type II keratin 23"/>
    <property type="match status" value="1"/>
</dbReference>
<dbReference type="Gene3D" id="1.20.5.170">
    <property type="match status" value="1"/>
</dbReference>
<dbReference type="Gene3D" id="1.20.5.500">
    <property type="entry name" value="Single helix bin"/>
    <property type="match status" value="1"/>
</dbReference>
<dbReference type="Gene3D" id="1.20.5.1160">
    <property type="entry name" value="Vasodilator-stimulated phosphoprotein"/>
    <property type="match status" value="1"/>
</dbReference>
<dbReference type="InterPro" id="IPR018039">
    <property type="entry name" value="IF_conserved"/>
</dbReference>
<dbReference type="InterPro" id="IPR039008">
    <property type="entry name" value="IF_rod_dom"/>
</dbReference>
<dbReference type="InterPro" id="IPR032444">
    <property type="entry name" value="Keratin_2_head"/>
</dbReference>
<dbReference type="InterPro" id="IPR003054">
    <property type="entry name" value="Keratin_II"/>
</dbReference>
<dbReference type="PANTHER" id="PTHR45616">
    <property type="entry name" value="GATA-TYPE DOMAIN-CONTAINING PROTEIN"/>
    <property type="match status" value="1"/>
</dbReference>
<dbReference type="PANTHER" id="PTHR45616:SF13">
    <property type="entry name" value="KERATIN, TYPE II CYTOSKELETAL 75"/>
    <property type="match status" value="1"/>
</dbReference>
<dbReference type="Pfam" id="PF00038">
    <property type="entry name" value="Filament"/>
    <property type="match status" value="1"/>
</dbReference>
<dbReference type="Pfam" id="PF16208">
    <property type="entry name" value="Keratin_2_head"/>
    <property type="match status" value="2"/>
</dbReference>
<dbReference type="PRINTS" id="PR01276">
    <property type="entry name" value="TYPE2KERATIN"/>
</dbReference>
<dbReference type="SMART" id="SM01391">
    <property type="entry name" value="Filament"/>
    <property type="match status" value="1"/>
</dbReference>
<dbReference type="SUPFAM" id="SSF64593">
    <property type="entry name" value="Intermediate filament protein, coiled coil region"/>
    <property type="match status" value="3"/>
</dbReference>
<dbReference type="PROSITE" id="PS00226">
    <property type="entry name" value="IF_ROD_1"/>
    <property type="match status" value="1"/>
</dbReference>
<dbReference type="PROSITE" id="PS51842">
    <property type="entry name" value="IF_ROD_2"/>
    <property type="match status" value="1"/>
</dbReference>
<sequence>MSRQSTVTFHSGSRRGFSTASATTPTAGRSRFSSVSVARSSGNSGGLGRISGIGSGFGSRSLYNLGATRPVSVGGCAGSGFRSGFGGRASSSFGYGGGFGGPGFPVCPSGSIQEVTVNQSLLTPLNLQIDPTIQRVRKEEREQIKTLNNKFASFIDKVRFLEQQNKVLETKWNLLQEQGSRTVRQNLEPFFDAYVNDLRRQLDSVTAERGRLDAELRHMQEVVEDFKVRYEDEINKRAAAENEFVGLKKDVDGAYMNKVELEAKVDSLTDQINFYRMVYEAELSQMQNQVSDTSVVLSMDNNRSLDLDSIIAEVKAQYEDIANRSRAEAESWYQTKYEELQVTAGRHGDDLRNTKQEISEMNRMIQRLRSEIDAVKKQCSSLQTAISDTEQRGELALKDARAKLVELEDALQKAKQDMARLLREYQELMNVKLALDVEIATYRKLLEGEECRLSGEGVSPVNISVVTSTVSSGYGGGTNIGGGSLGLGGNSGYSFTTTGGHSLGTGLGGSGFTTSSSRGPVGSGSSIKFVSSTSSSRKSYKH</sequence>
<name>K2C75_RAT</name>
<comment type="function">
    <text evidence="1">Plays a central role in hair and nail formation. Essential component of keratin intermediate filaments in the companion layer of the hair follicle (By similarity).</text>
</comment>
<comment type="subunit">
    <text evidence="1">Heterodimer of a type I and a type II keratin. May associate with KRT17.</text>
</comment>
<comment type="miscellaneous">
    <text>There are two types of cytoskeletal and microfibrillar keratin, I (acidic) and II (neutral to basic) (40-55 and 56-70 kDa, respectively).</text>
</comment>
<comment type="similarity">
    <text evidence="2">Belongs to the intermediate filament family.</text>
</comment>
<protein>
    <recommendedName>
        <fullName>Keratin, type II cytoskeletal 75</fullName>
    </recommendedName>
    <alternativeName>
        <fullName>Cytokeratin-75</fullName>
        <shortName>CK-75</shortName>
    </alternativeName>
    <alternativeName>
        <fullName>Keratin-6 hair follicle</fullName>
    </alternativeName>
    <alternativeName>
        <fullName>Keratin-75</fullName>
        <shortName>K75</shortName>
    </alternativeName>
    <alternativeName>
        <fullName>Type II keratin-K6hf</fullName>
    </alternativeName>
    <alternativeName>
        <fullName>Type-II keratin Kb18</fullName>
    </alternativeName>
</protein>
<reference key="1">
    <citation type="journal article" date="2004" name="Nature">
        <title>Genome sequence of the Brown Norway rat yields insights into mammalian evolution.</title>
        <authorList>
            <person name="Gibbs R.A."/>
            <person name="Weinstock G.M."/>
            <person name="Metzker M.L."/>
            <person name="Muzny D.M."/>
            <person name="Sodergren E.J."/>
            <person name="Scherer S."/>
            <person name="Scott G."/>
            <person name="Steffen D."/>
            <person name="Worley K.C."/>
            <person name="Burch P.E."/>
            <person name="Okwuonu G."/>
            <person name="Hines S."/>
            <person name="Lewis L."/>
            <person name="Deramo C."/>
            <person name="Delgado O."/>
            <person name="Dugan-Rocha S."/>
            <person name="Miner G."/>
            <person name="Morgan M."/>
            <person name="Hawes A."/>
            <person name="Gill R."/>
            <person name="Holt R.A."/>
            <person name="Adams M.D."/>
            <person name="Amanatides P.G."/>
            <person name="Baden-Tillson H."/>
            <person name="Barnstead M."/>
            <person name="Chin S."/>
            <person name="Evans C.A."/>
            <person name="Ferriera S."/>
            <person name="Fosler C."/>
            <person name="Glodek A."/>
            <person name="Gu Z."/>
            <person name="Jennings D."/>
            <person name="Kraft C.L."/>
            <person name="Nguyen T."/>
            <person name="Pfannkoch C.M."/>
            <person name="Sitter C."/>
            <person name="Sutton G.G."/>
            <person name="Venter J.C."/>
            <person name="Woodage T."/>
            <person name="Smith D."/>
            <person name="Lee H.-M."/>
            <person name="Gustafson E."/>
            <person name="Cahill P."/>
            <person name="Kana A."/>
            <person name="Doucette-Stamm L."/>
            <person name="Weinstock K."/>
            <person name="Fechtel K."/>
            <person name="Weiss R.B."/>
            <person name="Dunn D.M."/>
            <person name="Green E.D."/>
            <person name="Blakesley R.W."/>
            <person name="Bouffard G.G."/>
            <person name="De Jong P.J."/>
            <person name="Osoegawa K."/>
            <person name="Zhu B."/>
            <person name="Marra M."/>
            <person name="Schein J."/>
            <person name="Bosdet I."/>
            <person name="Fjell C."/>
            <person name="Jones S."/>
            <person name="Krzywinski M."/>
            <person name="Mathewson C."/>
            <person name="Siddiqui A."/>
            <person name="Wye N."/>
            <person name="McPherson J."/>
            <person name="Zhao S."/>
            <person name="Fraser C.M."/>
            <person name="Shetty J."/>
            <person name="Shatsman S."/>
            <person name="Geer K."/>
            <person name="Chen Y."/>
            <person name="Abramzon S."/>
            <person name="Nierman W.C."/>
            <person name="Havlak P.H."/>
            <person name="Chen R."/>
            <person name="Durbin K.J."/>
            <person name="Egan A."/>
            <person name="Ren Y."/>
            <person name="Song X.-Z."/>
            <person name="Li B."/>
            <person name="Liu Y."/>
            <person name="Qin X."/>
            <person name="Cawley S."/>
            <person name="Cooney A.J."/>
            <person name="D'Souza L.M."/>
            <person name="Martin K."/>
            <person name="Wu J.Q."/>
            <person name="Gonzalez-Garay M.L."/>
            <person name="Jackson A.R."/>
            <person name="Kalafus K.J."/>
            <person name="McLeod M.P."/>
            <person name="Milosavljevic A."/>
            <person name="Virk D."/>
            <person name="Volkov A."/>
            <person name="Wheeler D.A."/>
            <person name="Zhang Z."/>
            <person name="Bailey J.A."/>
            <person name="Eichler E.E."/>
            <person name="Tuzun E."/>
            <person name="Birney E."/>
            <person name="Mongin E."/>
            <person name="Ureta-Vidal A."/>
            <person name="Woodwark C."/>
            <person name="Zdobnov E."/>
            <person name="Bork P."/>
            <person name="Suyama M."/>
            <person name="Torrents D."/>
            <person name="Alexandersson M."/>
            <person name="Trask B.J."/>
            <person name="Young J.M."/>
            <person name="Huang H."/>
            <person name="Wang H."/>
            <person name="Xing H."/>
            <person name="Daniels S."/>
            <person name="Gietzen D."/>
            <person name="Schmidt J."/>
            <person name="Stevens K."/>
            <person name="Vitt U."/>
            <person name="Wingrove J."/>
            <person name="Camara F."/>
            <person name="Mar Alba M."/>
            <person name="Abril J.F."/>
            <person name="Guigo R."/>
            <person name="Smit A."/>
            <person name="Dubchak I."/>
            <person name="Rubin E.M."/>
            <person name="Couronne O."/>
            <person name="Poliakov A."/>
            <person name="Huebner N."/>
            <person name="Ganten D."/>
            <person name="Goesele C."/>
            <person name="Hummel O."/>
            <person name="Kreitler T."/>
            <person name="Lee Y.-A."/>
            <person name="Monti J."/>
            <person name="Schulz H."/>
            <person name="Zimdahl H."/>
            <person name="Himmelbauer H."/>
            <person name="Lehrach H."/>
            <person name="Jacob H.J."/>
            <person name="Bromberg S."/>
            <person name="Gullings-Handley J."/>
            <person name="Jensen-Seaman M.I."/>
            <person name="Kwitek A.E."/>
            <person name="Lazar J."/>
            <person name="Pasko D."/>
            <person name="Tonellato P.J."/>
            <person name="Twigger S."/>
            <person name="Ponting C.P."/>
            <person name="Duarte J.M."/>
            <person name="Rice S."/>
            <person name="Goodstadt L."/>
            <person name="Beatson S.A."/>
            <person name="Emes R.D."/>
            <person name="Winter E.E."/>
            <person name="Webber C."/>
            <person name="Brandt P."/>
            <person name="Nyakatura G."/>
            <person name="Adetobi M."/>
            <person name="Chiaromonte F."/>
            <person name="Elnitski L."/>
            <person name="Eswara P."/>
            <person name="Hardison R.C."/>
            <person name="Hou M."/>
            <person name="Kolbe D."/>
            <person name="Makova K."/>
            <person name="Miller W."/>
            <person name="Nekrutenko A."/>
            <person name="Riemer C."/>
            <person name="Schwartz S."/>
            <person name="Taylor J."/>
            <person name="Yang S."/>
            <person name="Zhang Y."/>
            <person name="Lindpaintner K."/>
            <person name="Andrews T.D."/>
            <person name="Caccamo M."/>
            <person name="Clamp M."/>
            <person name="Clarke L."/>
            <person name="Curwen V."/>
            <person name="Durbin R.M."/>
            <person name="Eyras E."/>
            <person name="Searle S.M."/>
            <person name="Cooper G.M."/>
            <person name="Batzoglou S."/>
            <person name="Brudno M."/>
            <person name="Sidow A."/>
            <person name="Stone E.A."/>
            <person name="Payseur B.A."/>
            <person name="Bourque G."/>
            <person name="Lopez-Otin C."/>
            <person name="Puente X.S."/>
            <person name="Chakrabarti K."/>
            <person name="Chatterji S."/>
            <person name="Dewey C."/>
            <person name="Pachter L."/>
            <person name="Bray N."/>
            <person name="Yap V.B."/>
            <person name="Caspi A."/>
            <person name="Tesler G."/>
            <person name="Pevzner P.A."/>
            <person name="Haussler D."/>
            <person name="Roskin K.M."/>
            <person name="Baertsch R."/>
            <person name="Clawson H."/>
            <person name="Furey T.S."/>
            <person name="Hinrichs A.S."/>
            <person name="Karolchik D."/>
            <person name="Kent W.J."/>
            <person name="Rosenbloom K.R."/>
            <person name="Trumbower H."/>
            <person name="Weirauch M."/>
            <person name="Cooper D.N."/>
            <person name="Stenson P.D."/>
            <person name="Ma B."/>
            <person name="Brent M."/>
            <person name="Arumugam M."/>
            <person name="Shteynberg D."/>
            <person name="Copley R.R."/>
            <person name="Taylor M.S."/>
            <person name="Riethman H."/>
            <person name="Mudunuri U."/>
            <person name="Peterson J."/>
            <person name="Guyer M."/>
            <person name="Felsenfeld A."/>
            <person name="Old S."/>
            <person name="Mockrin S."/>
            <person name="Collins F.S."/>
        </authorList>
    </citation>
    <scope>NUCLEOTIDE SEQUENCE [LARGE SCALE GENOMIC DNA]</scope>
    <source>
        <strain>Brown Norway</strain>
    </source>
</reference>
<reference key="2">
    <citation type="journal article" date="2004" name="Eur. J. Cell Biol.">
        <title>Comprehensive analysis of keratin gene clusters in humans and rodents.</title>
        <authorList>
            <person name="Hesse M."/>
            <person name="Zimek A."/>
            <person name="Weber K."/>
            <person name="Magin T.M."/>
        </authorList>
    </citation>
    <scope>IDENTIFICATION</scope>
</reference>
<keyword id="KW-0175">Coiled coil</keyword>
<keyword id="KW-0403">Intermediate filament</keyword>
<keyword id="KW-0416">Keratin</keyword>
<keyword id="KW-1185">Reference proteome</keyword>
<feature type="chain" id="PRO_0000314889" description="Keratin, type II cytoskeletal 75">
    <location>
        <begin position="1"/>
        <end position="542"/>
    </location>
</feature>
<feature type="domain" description="IF rod" evidence="2">
    <location>
        <begin position="140"/>
        <end position="453"/>
    </location>
</feature>
<feature type="region of interest" description="Head">
    <location>
        <begin position="1"/>
        <end position="139"/>
    </location>
</feature>
<feature type="region of interest" description="Disordered" evidence="3">
    <location>
        <begin position="1"/>
        <end position="44"/>
    </location>
</feature>
<feature type="region of interest" description="Coil 1A">
    <location>
        <begin position="140"/>
        <end position="175"/>
    </location>
</feature>
<feature type="region of interest" description="Linker 1">
    <location>
        <begin position="176"/>
        <end position="194"/>
    </location>
</feature>
<feature type="region of interest" description="Coil 1B">
    <location>
        <begin position="195"/>
        <end position="287"/>
    </location>
</feature>
<feature type="region of interest" description="Linker 12">
    <location>
        <begin position="288"/>
        <end position="310"/>
    </location>
</feature>
<feature type="region of interest" description="Coil 2">
    <location>
        <begin position="311"/>
        <end position="449"/>
    </location>
</feature>
<feature type="region of interest" description="Tail">
    <location>
        <begin position="450"/>
        <end position="542"/>
    </location>
</feature>
<feature type="region of interest" description="Disordered" evidence="3">
    <location>
        <begin position="514"/>
        <end position="542"/>
    </location>
</feature>
<feature type="compositionally biased region" description="Polar residues" evidence="3">
    <location>
        <begin position="1"/>
        <end position="26"/>
    </location>
</feature>
<feature type="compositionally biased region" description="Low complexity" evidence="3">
    <location>
        <begin position="27"/>
        <end position="42"/>
    </location>
</feature>
<feature type="site" description="Stutter">
    <location>
        <position position="391"/>
    </location>
</feature>
<organism>
    <name type="scientific">Rattus norvegicus</name>
    <name type="common">Rat</name>
    <dbReference type="NCBI Taxonomy" id="10116"/>
    <lineage>
        <taxon>Eukaryota</taxon>
        <taxon>Metazoa</taxon>
        <taxon>Chordata</taxon>
        <taxon>Craniata</taxon>
        <taxon>Vertebrata</taxon>
        <taxon>Euteleostomi</taxon>
        <taxon>Mammalia</taxon>
        <taxon>Eutheria</taxon>
        <taxon>Euarchontoglires</taxon>
        <taxon>Glires</taxon>
        <taxon>Rodentia</taxon>
        <taxon>Myomorpha</taxon>
        <taxon>Muroidea</taxon>
        <taxon>Muridae</taxon>
        <taxon>Murinae</taxon>
        <taxon>Rattus</taxon>
    </lineage>
</organism>
<proteinExistence type="inferred from homology"/>
<gene>
    <name type="primary">Krt75</name>
    <name type="synonym">Kb18</name>
</gene>
<accession>Q6IG05</accession>
<evidence type="ECO:0000250" key="1"/>
<evidence type="ECO:0000255" key="2">
    <source>
        <dbReference type="PROSITE-ProRule" id="PRU01188"/>
    </source>
</evidence>
<evidence type="ECO:0000256" key="3">
    <source>
        <dbReference type="SAM" id="MobiDB-lite"/>
    </source>
</evidence>